<protein>
    <recommendedName>
        <fullName evidence="1">Chorismate synthase</fullName>
        <shortName evidence="1">CS</shortName>
        <ecNumber evidence="1">4.2.3.5</ecNumber>
    </recommendedName>
    <alternativeName>
        <fullName evidence="1">5-enolpyruvylshikimate-3-phosphate phospholyase</fullName>
    </alternativeName>
</protein>
<feature type="chain" id="PRO_1000078993" description="Chorismate synthase">
    <location>
        <begin position="1"/>
        <end position="361"/>
    </location>
</feature>
<feature type="binding site" evidence="1">
    <location>
        <position position="48"/>
    </location>
    <ligand>
        <name>NADP(+)</name>
        <dbReference type="ChEBI" id="CHEBI:58349"/>
    </ligand>
</feature>
<feature type="binding site" evidence="1">
    <location>
        <position position="54"/>
    </location>
    <ligand>
        <name>NADP(+)</name>
        <dbReference type="ChEBI" id="CHEBI:58349"/>
    </ligand>
</feature>
<feature type="binding site" evidence="1">
    <location>
        <begin position="125"/>
        <end position="127"/>
    </location>
    <ligand>
        <name>FMN</name>
        <dbReference type="ChEBI" id="CHEBI:58210"/>
    </ligand>
</feature>
<feature type="binding site" evidence="1">
    <location>
        <begin position="238"/>
        <end position="239"/>
    </location>
    <ligand>
        <name>FMN</name>
        <dbReference type="ChEBI" id="CHEBI:58210"/>
    </ligand>
</feature>
<feature type="binding site" evidence="1">
    <location>
        <position position="278"/>
    </location>
    <ligand>
        <name>FMN</name>
        <dbReference type="ChEBI" id="CHEBI:58210"/>
    </ligand>
</feature>
<feature type="binding site" evidence="1">
    <location>
        <begin position="293"/>
        <end position="297"/>
    </location>
    <ligand>
        <name>FMN</name>
        <dbReference type="ChEBI" id="CHEBI:58210"/>
    </ligand>
</feature>
<feature type="binding site" evidence="1">
    <location>
        <position position="319"/>
    </location>
    <ligand>
        <name>FMN</name>
        <dbReference type="ChEBI" id="CHEBI:58210"/>
    </ligand>
</feature>
<sequence length="361" mass="39151">MAGNTIGQLFRVTTFGESHGLALGCIVDGVPPGIPLTEADLQHDLDRRRPGTSRYTTQRREPDQVKILSGVFEGVTTGTSIGLLIENTDQRSQDYSAIKDVFRPGHADYTYEQKYGLRDYRGGGRSSARETAMRVAAGAIAKKYLAEKFGIEIRGCLTQMGDIPLEIKDWSQVEQNPFFCPDPDKIDALDELMRALKKEGDSIGAKVTVVASGVPAGLGEPVFDRLDADIAHALMSINAVKGVEIGDGFDVVALRGSQNRDEITKDGFQSNHAGGILGGISSGQQIIAHMALKPTSSITVPGRTINRFGEEVEMITKGRHDPCVGIRAVPIAEAMLAIVLMDHLLRQRAQNADVKTDIPRW</sequence>
<evidence type="ECO:0000255" key="1">
    <source>
        <dbReference type="HAMAP-Rule" id="MF_00300"/>
    </source>
</evidence>
<reference key="1">
    <citation type="submission" date="2008-02" db="EMBL/GenBank/DDBJ databases">
        <title>Complete sequence of Escherichia coli C str. ATCC 8739.</title>
        <authorList>
            <person name="Copeland A."/>
            <person name="Lucas S."/>
            <person name="Lapidus A."/>
            <person name="Glavina del Rio T."/>
            <person name="Dalin E."/>
            <person name="Tice H."/>
            <person name="Bruce D."/>
            <person name="Goodwin L."/>
            <person name="Pitluck S."/>
            <person name="Kiss H."/>
            <person name="Brettin T."/>
            <person name="Detter J.C."/>
            <person name="Han C."/>
            <person name="Kuske C.R."/>
            <person name="Schmutz J."/>
            <person name="Larimer F."/>
            <person name="Land M."/>
            <person name="Hauser L."/>
            <person name="Kyrpides N."/>
            <person name="Mikhailova N."/>
            <person name="Ingram L."/>
            <person name="Richardson P."/>
        </authorList>
    </citation>
    <scope>NUCLEOTIDE SEQUENCE [LARGE SCALE GENOMIC DNA]</scope>
    <source>
        <strain>ATCC 8739 / DSM 1576 / NBRC 3972 / NCIMB 8545 / WDCM 00012 / Crooks</strain>
    </source>
</reference>
<dbReference type="EC" id="4.2.3.5" evidence="1"/>
<dbReference type="EMBL" id="CP000946">
    <property type="protein sequence ID" value="ACA76989.1"/>
    <property type="molecule type" value="Genomic_DNA"/>
</dbReference>
<dbReference type="RefSeq" id="WP_001297933.1">
    <property type="nucleotide sequence ID" value="NZ_MTFT01000028.1"/>
</dbReference>
<dbReference type="SMR" id="B1IXB6"/>
<dbReference type="KEGG" id="ecl:EcolC_1323"/>
<dbReference type="HOGENOM" id="CLU_034547_0_2_6"/>
<dbReference type="UniPathway" id="UPA00053">
    <property type="reaction ID" value="UER00090"/>
</dbReference>
<dbReference type="GO" id="GO:0005829">
    <property type="term" value="C:cytosol"/>
    <property type="evidence" value="ECO:0007669"/>
    <property type="project" value="TreeGrafter"/>
</dbReference>
<dbReference type="GO" id="GO:0004107">
    <property type="term" value="F:chorismate synthase activity"/>
    <property type="evidence" value="ECO:0007669"/>
    <property type="project" value="UniProtKB-UniRule"/>
</dbReference>
<dbReference type="GO" id="GO:0010181">
    <property type="term" value="F:FMN binding"/>
    <property type="evidence" value="ECO:0007669"/>
    <property type="project" value="TreeGrafter"/>
</dbReference>
<dbReference type="GO" id="GO:0008652">
    <property type="term" value="P:amino acid biosynthetic process"/>
    <property type="evidence" value="ECO:0007669"/>
    <property type="project" value="UniProtKB-KW"/>
</dbReference>
<dbReference type="GO" id="GO:0009073">
    <property type="term" value="P:aromatic amino acid family biosynthetic process"/>
    <property type="evidence" value="ECO:0007669"/>
    <property type="project" value="UniProtKB-KW"/>
</dbReference>
<dbReference type="GO" id="GO:0009423">
    <property type="term" value="P:chorismate biosynthetic process"/>
    <property type="evidence" value="ECO:0007669"/>
    <property type="project" value="UniProtKB-UniRule"/>
</dbReference>
<dbReference type="CDD" id="cd07304">
    <property type="entry name" value="Chorismate_synthase"/>
    <property type="match status" value="1"/>
</dbReference>
<dbReference type="FunFam" id="3.60.150.10:FF:000001">
    <property type="entry name" value="Chorismate synthase"/>
    <property type="match status" value="1"/>
</dbReference>
<dbReference type="Gene3D" id="3.60.150.10">
    <property type="entry name" value="Chorismate synthase AroC"/>
    <property type="match status" value="1"/>
</dbReference>
<dbReference type="HAMAP" id="MF_00300">
    <property type="entry name" value="Chorismate_synth"/>
    <property type="match status" value="1"/>
</dbReference>
<dbReference type="InterPro" id="IPR000453">
    <property type="entry name" value="Chorismate_synth"/>
</dbReference>
<dbReference type="InterPro" id="IPR035904">
    <property type="entry name" value="Chorismate_synth_AroC_sf"/>
</dbReference>
<dbReference type="InterPro" id="IPR020541">
    <property type="entry name" value="Chorismate_synthase_CS"/>
</dbReference>
<dbReference type="NCBIfam" id="TIGR00033">
    <property type="entry name" value="aroC"/>
    <property type="match status" value="1"/>
</dbReference>
<dbReference type="NCBIfam" id="NF003793">
    <property type="entry name" value="PRK05382.1"/>
    <property type="match status" value="1"/>
</dbReference>
<dbReference type="PANTHER" id="PTHR21085">
    <property type="entry name" value="CHORISMATE SYNTHASE"/>
    <property type="match status" value="1"/>
</dbReference>
<dbReference type="PANTHER" id="PTHR21085:SF0">
    <property type="entry name" value="CHORISMATE SYNTHASE"/>
    <property type="match status" value="1"/>
</dbReference>
<dbReference type="Pfam" id="PF01264">
    <property type="entry name" value="Chorismate_synt"/>
    <property type="match status" value="1"/>
</dbReference>
<dbReference type="PIRSF" id="PIRSF001456">
    <property type="entry name" value="Chorismate_synth"/>
    <property type="match status" value="1"/>
</dbReference>
<dbReference type="SUPFAM" id="SSF103263">
    <property type="entry name" value="Chorismate synthase, AroC"/>
    <property type="match status" value="1"/>
</dbReference>
<dbReference type="PROSITE" id="PS00787">
    <property type="entry name" value="CHORISMATE_SYNTHASE_1"/>
    <property type="match status" value="1"/>
</dbReference>
<dbReference type="PROSITE" id="PS00788">
    <property type="entry name" value="CHORISMATE_SYNTHASE_2"/>
    <property type="match status" value="1"/>
</dbReference>
<dbReference type="PROSITE" id="PS00789">
    <property type="entry name" value="CHORISMATE_SYNTHASE_3"/>
    <property type="match status" value="1"/>
</dbReference>
<comment type="function">
    <text evidence="1">Catalyzes the anti-1,4-elimination of the C-3 phosphate and the C-6 proR hydrogen from 5-enolpyruvylshikimate-3-phosphate (EPSP) to yield chorismate, which is the branch point compound that serves as the starting substrate for the three terminal pathways of aromatic amino acid biosynthesis. This reaction introduces a second double bond into the aromatic ring system.</text>
</comment>
<comment type="catalytic activity">
    <reaction evidence="1">
        <text>5-O-(1-carboxyvinyl)-3-phosphoshikimate = chorismate + phosphate</text>
        <dbReference type="Rhea" id="RHEA:21020"/>
        <dbReference type="ChEBI" id="CHEBI:29748"/>
        <dbReference type="ChEBI" id="CHEBI:43474"/>
        <dbReference type="ChEBI" id="CHEBI:57701"/>
        <dbReference type="EC" id="4.2.3.5"/>
    </reaction>
</comment>
<comment type="cofactor">
    <cofactor evidence="1">
        <name>FMNH2</name>
        <dbReference type="ChEBI" id="CHEBI:57618"/>
    </cofactor>
    <text evidence="1">Reduced FMN (FMNH(2)).</text>
</comment>
<comment type="pathway">
    <text evidence="1">Metabolic intermediate biosynthesis; chorismate biosynthesis; chorismate from D-erythrose 4-phosphate and phosphoenolpyruvate: step 7/7.</text>
</comment>
<comment type="subunit">
    <text evidence="1">Homotetramer.</text>
</comment>
<comment type="similarity">
    <text evidence="1">Belongs to the chorismate synthase family.</text>
</comment>
<name>AROC_ECOLC</name>
<organism>
    <name type="scientific">Escherichia coli (strain ATCC 8739 / DSM 1576 / NBRC 3972 / NCIMB 8545 / WDCM 00012 / Crooks)</name>
    <dbReference type="NCBI Taxonomy" id="481805"/>
    <lineage>
        <taxon>Bacteria</taxon>
        <taxon>Pseudomonadati</taxon>
        <taxon>Pseudomonadota</taxon>
        <taxon>Gammaproteobacteria</taxon>
        <taxon>Enterobacterales</taxon>
        <taxon>Enterobacteriaceae</taxon>
        <taxon>Escherichia</taxon>
    </lineage>
</organism>
<keyword id="KW-0028">Amino-acid biosynthesis</keyword>
<keyword id="KW-0057">Aromatic amino acid biosynthesis</keyword>
<keyword id="KW-0274">FAD</keyword>
<keyword id="KW-0285">Flavoprotein</keyword>
<keyword id="KW-0288">FMN</keyword>
<keyword id="KW-0456">Lyase</keyword>
<keyword id="KW-0521">NADP</keyword>
<proteinExistence type="inferred from homology"/>
<gene>
    <name evidence="1" type="primary">aroC</name>
    <name type="ordered locus">EcolC_1323</name>
</gene>
<accession>B1IXB6</accession>